<proteinExistence type="inferred from homology"/>
<protein>
    <recommendedName>
        <fullName evidence="1">Acetate kinase</fullName>
        <ecNumber evidence="1">2.7.2.1</ecNumber>
    </recommendedName>
    <alternativeName>
        <fullName evidence="1">Acetokinase</fullName>
    </alternativeName>
</protein>
<name>ACKA_STRPZ</name>
<organism>
    <name type="scientific">Streptococcus pyogenes serotype M49 (strain NZ131)</name>
    <dbReference type="NCBI Taxonomy" id="471876"/>
    <lineage>
        <taxon>Bacteria</taxon>
        <taxon>Bacillati</taxon>
        <taxon>Bacillota</taxon>
        <taxon>Bacilli</taxon>
        <taxon>Lactobacillales</taxon>
        <taxon>Streptococcaceae</taxon>
        <taxon>Streptococcus</taxon>
    </lineage>
</organism>
<sequence>MSKTIAINAGSSSLKWQLYQMPEEEVLAQGIIERIGLKDSISTVKYDGKKEEQILDIHDHTEAVKILLNDLIHFGIIAAYGEITGVGHRVVAGGELFKESVVVNDKVLEQIEELSVLAPLHNPGAAAGIRAFRDILPDITSVCVFDTSFHTSMAKHTYLYPIPQKYYTDYKVRKYGAHGTSHKYVAQEAAKMLGRPLEELKLITAHIGNGVSITANYHGKSVDTSMGFTPLAGPMMGTRSGDIDPAIIPYLIEQDPELKDAADVVNMLNKKSGLSGVSGISSDMRDIEAGLQEDNPDAVLAYNIFIDRIKKCIGQYFAVLNGADALVFTAGMGENAPLMRQDVIGGLSWFGMDIDPEKNVFGYRGDISTPESKVKVLVISTDEELCIARDVERLKNTK</sequence>
<dbReference type="EC" id="2.7.2.1" evidence="1"/>
<dbReference type="EMBL" id="CP000829">
    <property type="protein sequence ID" value="ACI60451.1"/>
    <property type="molecule type" value="Genomic_DNA"/>
</dbReference>
<dbReference type="SMR" id="B5XJD9"/>
<dbReference type="KEGG" id="soz:Spy49_0098"/>
<dbReference type="HOGENOM" id="CLU_020352_0_1_9"/>
<dbReference type="UniPathway" id="UPA00340">
    <property type="reaction ID" value="UER00458"/>
</dbReference>
<dbReference type="Proteomes" id="UP000001039">
    <property type="component" value="Chromosome"/>
</dbReference>
<dbReference type="GO" id="GO:0005737">
    <property type="term" value="C:cytoplasm"/>
    <property type="evidence" value="ECO:0007669"/>
    <property type="project" value="UniProtKB-SubCell"/>
</dbReference>
<dbReference type="GO" id="GO:0008776">
    <property type="term" value="F:acetate kinase activity"/>
    <property type="evidence" value="ECO:0007669"/>
    <property type="project" value="UniProtKB-UniRule"/>
</dbReference>
<dbReference type="GO" id="GO:0005524">
    <property type="term" value="F:ATP binding"/>
    <property type="evidence" value="ECO:0007669"/>
    <property type="project" value="UniProtKB-KW"/>
</dbReference>
<dbReference type="GO" id="GO:0000287">
    <property type="term" value="F:magnesium ion binding"/>
    <property type="evidence" value="ECO:0007669"/>
    <property type="project" value="UniProtKB-UniRule"/>
</dbReference>
<dbReference type="GO" id="GO:0006083">
    <property type="term" value="P:acetate metabolic process"/>
    <property type="evidence" value="ECO:0007669"/>
    <property type="project" value="TreeGrafter"/>
</dbReference>
<dbReference type="GO" id="GO:0006085">
    <property type="term" value="P:acetyl-CoA biosynthetic process"/>
    <property type="evidence" value="ECO:0007669"/>
    <property type="project" value="UniProtKB-UniRule"/>
</dbReference>
<dbReference type="CDD" id="cd24010">
    <property type="entry name" value="ASKHA_NBD_AcK_PK"/>
    <property type="match status" value="1"/>
</dbReference>
<dbReference type="Gene3D" id="3.30.420.40">
    <property type="match status" value="2"/>
</dbReference>
<dbReference type="HAMAP" id="MF_00020">
    <property type="entry name" value="Acetate_kinase"/>
    <property type="match status" value="1"/>
</dbReference>
<dbReference type="InterPro" id="IPR004372">
    <property type="entry name" value="Ac/propionate_kinase"/>
</dbReference>
<dbReference type="InterPro" id="IPR000890">
    <property type="entry name" value="Aliphatic_acid_kin_short-chain"/>
</dbReference>
<dbReference type="InterPro" id="IPR023865">
    <property type="entry name" value="Aliphatic_acid_kinase_CS"/>
</dbReference>
<dbReference type="InterPro" id="IPR043129">
    <property type="entry name" value="ATPase_NBD"/>
</dbReference>
<dbReference type="NCBIfam" id="TIGR00016">
    <property type="entry name" value="ackA"/>
    <property type="match status" value="1"/>
</dbReference>
<dbReference type="PANTHER" id="PTHR21060">
    <property type="entry name" value="ACETATE KINASE"/>
    <property type="match status" value="1"/>
</dbReference>
<dbReference type="PANTHER" id="PTHR21060:SF15">
    <property type="entry name" value="ACETATE KINASE-RELATED"/>
    <property type="match status" value="1"/>
</dbReference>
<dbReference type="Pfam" id="PF00871">
    <property type="entry name" value="Acetate_kinase"/>
    <property type="match status" value="1"/>
</dbReference>
<dbReference type="PIRSF" id="PIRSF000722">
    <property type="entry name" value="Acetate_prop_kin"/>
    <property type="match status" value="1"/>
</dbReference>
<dbReference type="PRINTS" id="PR00471">
    <property type="entry name" value="ACETATEKNASE"/>
</dbReference>
<dbReference type="SUPFAM" id="SSF53067">
    <property type="entry name" value="Actin-like ATPase domain"/>
    <property type="match status" value="2"/>
</dbReference>
<dbReference type="PROSITE" id="PS01075">
    <property type="entry name" value="ACETATE_KINASE_1"/>
    <property type="match status" value="1"/>
</dbReference>
<dbReference type="PROSITE" id="PS01076">
    <property type="entry name" value="ACETATE_KINASE_2"/>
    <property type="match status" value="1"/>
</dbReference>
<evidence type="ECO:0000255" key="1">
    <source>
        <dbReference type="HAMAP-Rule" id="MF_00020"/>
    </source>
</evidence>
<gene>
    <name evidence="1" type="primary">ackA</name>
    <name type="ordered locus">Spy49_0098</name>
</gene>
<accession>B5XJD9</accession>
<reference key="1">
    <citation type="journal article" date="2008" name="J. Bacteriol.">
        <title>Genome sequence of a nephritogenic and highly transformable M49 strain of Streptococcus pyogenes.</title>
        <authorList>
            <person name="McShan W.M."/>
            <person name="Ferretti J.J."/>
            <person name="Karasawa T."/>
            <person name="Suvorov A.N."/>
            <person name="Lin S."/>
            <person name="Qin B."/>
            <person name="Jia H."/>
            <person name="Kenton S."/>
            <person name="Najar F."/>
            <person name="Wu H."/>
            <person name="Scott J."/>
            <person name="Roe B.A."/>
            <person name="Savic D.J."/>
        </authorList>
    </citation>
    <scope>NUCLEOTIDE SEQUENCE [LARGE SCALE GENOMIC DNA]</scope>
    <source>
        <strain>NZ131</strain>
    </source>
</reference>
<comment type="function">
    <text evidence="1">Catalyzes the formation of acetyl phosphate from acetate and ATP. Can also catalyze the reverse reaction.</text>
</comment>
<comment type="catalytic activity">
    <reaction evidence="1">
        <text>acetate + ATP = acetyl phosphate + ADP</text>
        <dbReference type="Rhea" id="RHEA:11352"/>
        <dbReference type="ChEBI" id="CHEBI:22191"/>
        <dbReference type="ChEBI" id="CHEBI:30089"/>
        <dbReference type="ChEBI" id="CHEBI:30616"/>
        <dbReference type="ChEBI" id="CHEBI:456216"/>
        <dbReference type="EC" id="2.7.2.1"/>
    </reaction>
</comment>
<comment type="cofactor">
    <cofactor evidence="1">
        <name>Mg(2+)</name>
        <dbReference type="ChEBI" id="CHEBI:18420"/>
    </cofactor>
    <cofactor evidence="1">
        <name>Mn(2+)</name>
        <dbReference type="ChEBI" id="CHEBI:29035"/>
    </cofactor>
    <text evidence="1">Mg(2+). Can also accept Mn(2+).</text>
</comment>
<comment type="pathway">
    <text evidence="1">Metabolic intermediate biosynthesis; acetyl-CoA biosynthesis; acetyl-CoA from acetate: step 1/2.</text>
</comment>
<comment type="subunit">
    <text evidence="1">Homodimer.</text>
</comment>
<comment type="subcellular location">
    <subcellularLocation>
        <location evidence="1">Cytoplasm</location>
    </subcellularLocation>
</comment>
<comment type="similarity">
    <text evidence="1">Belongs to the acetokinase family.</text>
</comment>
<feature type="chain" id="PRO_1000089998" description="Acetate kinase">
    <location>
        <begin position="1"/>
        <end position="398"/>
    </location>
</feature>
<feature type="active site" description="Proton donor/acceptor" evidence="1">
    <location>
        <position position="146"/>
    </location>
</feature>
<feature type="binding site" evidence="1">
    <location>
        <position position="8"/>
    </location>
    <ligand>
        <name>Mg(2+)</name>
        <dbReference type="ChEBI" id="CHEBI:18420"/>
    </ligand>
</feature>
<feature type="binding site" evidence="1">
    <location>
        <position position="15"/>
    </location>
    <ligand>
        <name>ATP</name>
        <dbReference type="ChEBI" id="CHEBI:30616"/>
    </ligand>
</feature>
<feature type="binding site" evidence="1">
    <location>
        <position position="89"/>
    </location>
    <ligand>
        <name>substrate</name>
    </ligand>
</feature>
<feature type="binding site" evidence="1">
    <location>
        <begin position="206"/>
        <end position="210"/>
    </location>
    <ligand>
        <name>ATP</name>
        <dbReference type="ChEBI" id="CHEBI:30616"/>
    </ligand>
</feature>
<feature type="binding site" evidence="1">
    <location>
        <begin position="283"/>
        <end position="285"/>
    </location>
    <ligand>
        <name>ATP</name>
        <dbReference type="ChEBI" id="CHEBI:30616"/>
    </ligand>
</feature>
<feature type="binding site" evidence="1">
    <location>
        <begin position="331"/>
        <end position="335"/>
    </location>
    <ligand>
        <name>ATP</name>
        <dbReference type="ChEBI" id="CHEBI:30616"/>
    </ligand>
</feature>
<feature type="binding site" evidence="1">
    <location>
        <position position="383"/>
    </location>
    <ligand>
        <name>Mg(2+)</name>
        <dbReference type="ChEBI" id="CHEBI:18420"/>
    </ligand>
</feature>
<feature type="site" description="Transition state stabilizer" evidence="1">
    <location>
        <position position="178"/>
    </location>
</feature>
<feature type="site" description="Transition state stabilizer" evidence="1">
    <location>
        <position position="239"/>
    </location>
</feature>
<keyword id="KW-0067">ATP-binding</keyword>
<keyword id="KW-0963">Cytoplasm</keyword>
<keyword id="KW-0418">Kinase</keyword>
<keyword id="KW-0460">Magnesium</keyword>
<keyword id="KW-0479">Metal-binding</keyword>
<keyword id="KW-0547">Nucleotide-binding</keyword>
<keyword id="KW-0808">Transferase</keyword>